<dbReference type="PIR" id="B31436">
    <property type="entry name" value="B31436"/>
</dbReference>
<dbReference type="SMR" id="P68375"/>
<dbReference type="GO" id="GO:0005576">
    <property type="term" value="C:extracellular region"/>
    <property type="evidence" value="ECO:0007669"/>
    <property type="project" value="UniProtKB-SubCell"/>
</dbReference>
<dbReference type="GO" id="GO:0004867">
    <property type="term" value="F:serine-type endopeptidase inhibitor activity"/>
    <property type="evidence" value="ECO:0007669"/>
    <property type="project" value="UniProtKB-KW"/>
</dbReference>
<dbReference type="CDD" id="cd00104">
    <property type="entry name" value="KAZAL_FS"/>
    <property type="match status" value="1"/>
</dbReference>
<dbReference type="FunFam" id="3.30.60.30:FF:000037">
    <property type="entry name" value="Ovomucoid"/>
    <property type="match status" value="1"/>
</dbReference>
<dbReference type="Gene3D" id="3.30.60.30">
    <property type="match status" value="1"/>
</dbReference>
<dbReference type="InterPro" id="IPR051597">
    <property type="entry name" value="Bifunctional_prot_inhibitor"/>
</dbReference>
<dbReference type="InterPro" id="IPR002350">
    <property type="entry name" value="Kazal_dom"/>
</dbReference>
<dbReference type="InterPro" id="IPR036058">
    <property type="entry name" value="Kazal_dom_sf"/>
</dbReference>
<dbReference type="InterPro" id="IPR001239">
    <property type="entry name" value="Prot_inh_Kazal-m"/>
</dbReference>
<dbReference type="PANTHER" id="PTHR47729:SF1">
    <property type="entry name" value="OVOMUCOID-LIKE-RELATED"/>
    <property type="match status" value="1"/>
</dbReference>
<dbReference type="PANTHER" id="PTHR47729">
    <property type="entry name" value="SERINE PEPTIDASE INHIBITOR, KAZAL TYPE 2, TANDEM DUPLICATE 1-RELATED"/>
    <property type="match status" value="1"/>
</dbReference>
<dbReference type="Pfam" id="PF00050">
    <property type="entry name" value="Kazal_1"/>
    <property type="match status" value="1"/>
</dbReference>
<dbReference type="PRINTS" id="PR00290">
    <property type="entry name" value="KAZALINHBTR"/>
</dbReference>
<dbReference type="SMART" id="SM00280">
    <property type="entry name" value="KAZAL"/>
    <property type="match status" value="1"/>
</dbReference>
<dbReference type="SUPFAM" id="SSF100895">
    <property type="entry name" value="Kazal-type serine protease inhibitors"/>
    <property type="match status" value="1"/>
</dbReference>
<dbReference type="PROSITE" id="PS00282">
    <property type="entry name" value="KAZAL_1"/>
    <property type="match status" value="1"/>
</dbReference>
<dbReference type="PROSITE" id="PS51465">
    <property type="entry name" value="KAZAL_2"/>
    <property type="match status" value="1"/>
</dbReference>
<name>IOVO_POLRA</name>
<proteinExistence type="evidence at protein level"/>
<evidence type="ECO:0000255" key="1">
    <source>
        <dbReference type="PROSITE-ProRule" id="PRU00798"/>
    </source>
</evidence>
<comment type="subcellular location">
    <subcellularLocation>
        <location>Secreted</location>
    </subcellularLocation>
</comment>
<comment type="domain">
    <text>Avian ovomucoid consists of three homologous, tandem Kazal family inhibitory domains.</text>
</comment>
<sequence>IAIVDCSDYPKPVCSLEYMPLCGSDSKTYSNKCDFCNAVVDSNGTLTLSHFGKC</sequence>
<accession>P68375</accession>
<accession>P05578</accession>
<feature type="chain" id="PRO_0000073169" description="Ovomucoid">
    <location>
        <begin position="1" status="less than"/>
        <end position="54" status="greater than"/>
    </location>
</feature>
<feature type="domain" description="Kazal-like" evidence="1">
    <location>
        <begin position="4"/>
        <end position="54"/>
    </location>
</feature>
<feature type="site" description="Reactive bond 3">
    <location>
        <begin position="16"/>
        <end position="17"/>
    </location>
</feature>
<feature type="glycosylation site" description="N-linked (GlcNAc...) asparagine">
    <location>
        <position position="43"/>
    </location>
</feature>
<feature type="disulfide bond">
    <location>
        <begin position="6"/>
        <end position="36"/>
    </location>
</feature>
<feature type="disulfide bond">
    <location>
        <begin position="14"/>
        <end position="33"/>
    </location>
</feature>
<feature type="disulfide bond">
    <location>
        <begin position="22"/>
        <end position="54"/>
    </location>
</feature>
<feature type="non-terminal residue">
    <location>
        <position position="1"/>
    </location>
</feature>
<feature type="non-terminal residue">
    <location>
        <position position="54"/>
    </location>
</feature>
<organism>
    <name type="scientific">Polyboroides radiatus</name>
    <name type="common">Madagascar harrier-hawk</name>
    <name type="synonym">Vultur radiatus</name>
    <dbReference type="NCBI Taxonomy" id="8973"/>
    <lineage>
        <taxon>Eukaryota</taxon>
        <taxon>Metazoa</taxon>
        <taxon>Chordata</taxon>
        <taxon>Craniata</taxon>
        <taxon>Vertebrata</taxon>
        <taxon>Euteleostomi</taxon>
        <taxon>Archelosauria</taxon>
        <taxon>Archosauria</taxon>
        <taxon>Dinosauria</taxon>
        <taxon>Saurischia</taxon>
        <taxon>Theropoda</taxon>
        <taxon>Coelurosauria</taxon>
        <taxon>Aves</taxon>
        <taxon>Neognathae</taxon>
        <taxon>Neoaves</taxon>
        <taxon>Telluraves</taxon>
        <taxon>Accipitrimorphae</taxon>
        <taxon>Accipitriformes</taxon>
        <taxon>Accipitridae</taxon>
        <taxon>Accipitrinae</taxon>
        <taxon>Polyboroides</taxon>
    </lineage>
</organism>
<keyword id="KW-0903">Direct protein sequencing</keyword>
<keyword id="KW-1015">Disulfide bond</keyword>
<keyword id="KW-0325">Glycoprotein</keyword>
<keyword id="KW-0646">Protease inhibitor</keyword>
<keyword id="KW-0677">Repeat</keyword>
<keyword id="KW-0964">Secreted</keyword>
<keyword id="KW-0722">Serine protease inhibitor</keyword>
<protein>
    <recommendedName>
        <fullName>Ovomucoid</fullName>
    </recommendedName>
</protein>
<reference key="1">
    <citation type="journal article" date="1987" name="Biochemistry">
        <title>Ovomucoid third domains from 100 avian species: isolation, sequences, and hypervariability of enzyme-inhibitor contact residues.</title>
        <authorList>
            <person name="Laskowski M. Jr."/>
            <person name="Kato I."/>
            <person name="Ardelt W."/>
            <person name="Cook J."/>
            <person name="Denton A."/>
            <person name="Empie M.W."/>
            <person name="Kohr W.J."/>
            <person name="Park S.J."/>
            <person name="Parks K."/>
            <person name="Schatzley B.L."/>
            <person name="Schoenberger O.L."/>
            <person name="Tashiro M."/>
            <person name="Vichot G."/>
            <person name="Whatley H.E."/>
            <person name="Wieczorek A."/>
            <person name="Wieczorek M."/>
        </authorList>
    </citation>
    <scope>PROTEIN SEQUENCE</scope>
</reference>